<keyword id="KW-0520">NAD</keyword>
<keyword id="KW-0808">Transferase</keyword>
<evidence type="ECO:0000255" key="1">
    <source>
        <dbReference type="HAMAP-Rule" id="MF_00299"/>
    </source>
</evidence>
<name>KPTA_ECOHS</name>
<gene>
    <name evidence="1" type="primary">kptA</name>
    <name type="ordered locus">EcHS_A4559</name>
</gene>
<reference key="1">
    <citation type="journal article" date="2008" name="J. Bacteriol.">
        <title>The pangenome structure of Escherichia coli: comparative genomic analysis of E. coli commensal and pathogenic isolates.</title>
        <authorList>
            <person name="Rasko D.A."/>
            <person name="Rosovitz M.J."/>
            <person name="Myers G.S.A."/>
            <person name="Mongodin E.F."/>
            <person name="Fricke W.F."/>
            <person name="Gajer P."/>
            <person name="Crabtree J."/>
            <person name="Sebaihia M."/>
            <person name="Thomson N.R."/>
            <person name="Chaudhuri R."/>
            <person name="Henderson I.R."/>
            <person name="Sperandio V."/>
            <person name="Ravel J."/>
        </authorList>
    </citation>
    <scope>NUCLEOTIDE SEQUENCE [LARGE SCALE GENOMIC DNA]</scope>
    <source>
        <strain>HS</strain>
    </source>
</reference>
<dbReference type="EC" id="2.7.1.-" evidence="1"/>
<dbReference type="EMBL" id="CP000802">
    <property type="protein sequence ID" value="ABV08712.1"/>
    <property type="molecule type" value="Genomic_DNA"/>
</dbReference>
<dbReference type="RefSeq" id="WP_001151864.1">
    <property type="nucleotide sequence ID" value="NC_009800.1"/>
</dbReference>
<dbReference type="SMR" id="A8A858"/>
<dbReference type="KEGG" id="ecx:EcHS_A4559"/>
<dbReference type="HOGENOM" id="CLU_052998_4_0_6"/>
<dbReference type="GO" id="GO:0003950">
    <property type="term" value="F:NAD+ poly-ADP-ribosyltransferase activity"/>
    <property type="evidence" value="ECO:0007669"/>
    <property type="project" value="InterPro"/>
</dbReference>
<dbReference type="GO" id="GO:0000215">
    <property type="term" value="F:tRNA 2'-phosphotransferase activity"/>
    <property type="evidence" value="ECO:0007669"/>
    <property type="project" value="TreeGrafter"/>
</dbReference>
<dbReference type="GO" id="GO:0006388">
    <property type="term" value="P:tRNA splicing, via endonucleolytic cleavage and ligation"/>
    <property type="evidence" value="ECO:0007669"/>
    <property type="project" value="UniProtKB-UniRule"/>
</dbReference>
<dbReference type="FunFam" id="1.10.10.970:FF:000001">
    <property type="entry name" value="RNA 2'-phosphotransferase"/>
    <property type="match status" value="1"/>
</dbReference>
<dbReference type="FunFam" id="3.20.170.30:FF:000001">
    <property type="entry name" value="RNA 2'-phosphotransferase"/>
    <property type="match status" value="1"/>
</dbReference>
<dbReference type="Gene3D" id="3.20.170.30">
    <property type="match status" value="1"/>
</dbReference>
<dbReference type="Gene3D" id="1.10.10.970">
    <property type="entry name" value="RNA 2'-phosphotransferase, Tpt1/KptA family, N-terminal domain"/>
    <property type="match status" value="1"/>
</dbReference>
<dbReference type="HAMAP" id="MF_00299">
    <property type="entry name" value="KptA"/>
    <property type="match status" value="1"/>
</dbReference>
<dbReference type="InterPro" id="IPR002745">
    <property type="entry name" value="Ptrans_KptA/Tpt1"/>
</dbReference>
<dbReference type="InterPro" id="IPR042081">
    <property type="entry name" value="RNA_2'-PTrans_C"/>
</dbReference>
<dbReference type="InterPro" id="IPR022928">
    <property type="entry name" value="RNA_2'-PTrans_KptA"/>
</dbReference>
<dbReference type="InterPro" id="IPR042080">
    <property type="entry name" value="RNA_2'-PTrans_N"/>
</dbReference>
<dbReference type="NCBIfam" id="NF002012">
    <property type="entry name" value="PRK00819.1-1"/>
    <property type="match status" value="1"/>
</dbReference>
<dbReference type="NCBIfam" id="NF002014">
    <property type="entry name" value="PRK00819.1-4"/>
    <property type="match status" value="1"/>
</dbReference>
<dbReference type="PANTHER" id="PTHR12684">
    <property type="entry name" value="PUTATIVE PHOSPHOTRANSFERASE"/>
    <property type="match status" value="1"/>
</dbReference>
<dbReference type="PANTHER" id="PTHR12684:SF2">
    <property type="entry name" value="TRNA 2'-PHOSPHOTRANSFERASE 1"/>
    <property type="match status" value="1"/>
</dbReference>
<dbReference type="Pfam" id="PF01885">
    <property type="entry name" value="PTS_2-RNA"/>
    <property type="match status" value="1"/>
</dbReference>
<dbReference type="SUPFAM" id="SSF56399">
    <property type="entry name" value="ADP-ribosylation"/>
    <property type="match status" value="1"/>
</dbReference>
<organism>
    <name type="scientific">Escherichia coli O9:H4 (strain HS)</name>
    <dbReference type="NCBI Taxonomy" id="331112"/>
    <lineage>
        <taxon>Bacteria</taxon>
        <taxon>Pseudomonadati</taxon>
        <taxon>Pseudomonadota</taxon>
        <taxon>Gammaproteobacteria</taxon>
        <taxon>Enterobacterales</taxon>
        <taxon>Enterobacteriaceae</taxon>
        <taxon>Escherichia</taxon>
    </lineage>
</organism>
<feature type="chain" id="PRO_1000059305" description="Probable RNA 2'-phosphotransferase">
    <location>
        <begin position="1"/>
        <end position="184"/>
    </location>
</feature>
<protein>
    <recommendedName>
        <fullName evidence="1">Probable RNA 2'-phosphotransferase</fullName>
        <ecNumber evidence="1">2.7.1.-</ecNumber>
    </recommendedName>
</protein>
<accession>A8A858</accession>
<sequence length="184" mass="20560">MAKYNEKELADTSKFLSFVLRHKPEAIGIVLDREGWADIDKLILCAQKAGKRLTRTLLDTVVATSDKKRFSYSSDGRCIRAVQGHSTSQVAISFAEKTPPQFLYHGTASRFLDEIKKQGLIAGERHYVHLSADEATARKVGARHGSPVILTVKAQEMAKRGIPFWQAENGVWLTSTVAVEFLEW</sequence>
<proteinExistence type="inferred from homology"/>
<comment type="function">
    <text evidence="1">Removes the 2'-phosphate from RNA via an intermediate in which the phosphate is ADP-ribosylated by NAD followed by a presumed transesterification to release the RNA and generate ADP-ribose 1''-2''-cyclic phosphate (APPR&gt;P). May function as an ADP-ribosylase.</text>
</comment>
<comment type="similarity">
    <text evidence="1">Belongs to the KptA/TPT1 family.</text>
</comment>